<organism>
    <name type="scientific">Drosophila melanogaster</name>
    <name type="common">Fruit fly</name>
    <dbReference type="NCBI Taxonomy" id="7227"/>
    <lineage>
        <taxon>Eukaryota</taxon>
        <taxon>Metazoa</taxon>
        <taxon>Ecdysozoa</taxon>
        <taxon>Arthropoda</taxon>
        <taxon>Hexapoda</taxon>
        <taxon>Insecta</taxon>
        <taxon>Pterygota</taxon>
        <taxon>Neoptera</taxon>
        <taxon>Endopterygota</taxon>
        <taxon>Diptera</taxon>
        <taxon>Brachycera</taxon>
        <taxon>Muscomorpha</taxon>
        <taxon>Ephydroidea</taxon>
        <taxon>Drosophilidae</taxon>
        <taxon>Drosophila</taxon>
        <taxon>Sophophora</taxon>
    </lineage>
</organism>
<gene>
    <name evidence="6" type="primary">AlaRS-m</name>
    <name evidence="1" type="synonym">Aats-ala-m</name>
    <name type="synonym">alaS</name>
    <name evidence="6" type="ORF">CG4633</name>
</gene>
<evidence type="ECO:0000255" key="1">
    <source>
        <dbReference type="HAMAP-Rule" id="MF_03133"/>
    </source>
</evidence>
<evidence type="ECO:0000269" key="2">
    <source>
    </source>
</evidence>
<evidence type="ECO:0000269" key="3">
    <source>
    </source>
</evidence>
<evidence type="ECO:0000303" key="4">
    <source>
    </source>
</evidence>
<evidence type="ECO:0000305" key="5"/>
<evidence type="ECO:0000312" key="6">
    <source>
        <dbReference type="FlyBase" id="FBgn0028962"/>
    </source>
</evidence>
<sequence length="1012" mass="113104">MYNSAKQLQRVLTAREIRKTFLDHFTVNHGHKFVRSSPVVPFCDPTVAFVNAGMNQFKSVFLGTAAAPHKRVVNSQKCVRVGGKHNDLSVVGTDGYHHTFFEMLGNWSFGDYFKREACAMALELLRGPYNIDPGRLYVTYFAGDKVLGIPADLECFEIWRSLGFPASRILPFGCADNFWEMGATGPCGPCTEIHIDHRPDLGSVEQRAKLVNAGRSDLTELWNLVFIQYNRHADGSISQLPAHHVDTGMGFERLTAVLQNKSSNYDTDLFTPIFDGIQQAAKTPVYSGSFPDGGNAAVLDTSYRILADHARMVTACLADGMLPDQNQKLRRVLRKALNISEHVFAHDKLLTQLVPIVVETLGEAYPEMAAKQQAVIDLICHEQEVYKNLRESSSKAFAEVLMEFPNLDDIDLMECPGFVPAYRELQMQRCKFSNNTIPGDFLYKLTDTYGLTEESFLKLAELENMNCDLERYRAEVSLAKLKAKGNQRETAGGSLCDLATEQRIAEAQAMLTKRLTPTDNSHKYTYSFDKESDSYQIPPLKTRVLGMLLNDAEVSRTQGSRIQQPFTDLISIVTAGSNFYYESGGQQSDGGKILVSNHQQPDHPHSLDVIGVKHLNDCVVHICKLSSPTDAFQLAIGDEVELQVDAQQRQLNTCHHTATHLLNAAIRSLFKKVTYQVSSSVSSDQCKLELGLLGKRIQKTDVQLIEDLINRVICSAAPVEVQLLSAAEVLEQNDITMVPGEVYPEQGLRLVNVESPELQLSSKELCCGTHATNTSELSCFCIVNLKQTNRARFAFTAVAGQAAENVLKTAALLRHRVDLLEKQFQTDKLTNATEAELQTIRHNMLHTDIKLPYAFKMDTLERITEMLKRIKDSSRTTLKEFVDVEMRTLLQEKPLDTHPFILHYITSSALVEEIPLQRATKLCPDRPILVISVCDSVVKARCCVPEKCITEKFNASAWLQSFADTFNGQIAAPKGQNPQAVCNMKGRRVSNLFEEQLEQAMSKAHAYAKLYL</sequence>
<accession>Q9VRJ1</accession>
<accession>Q9U6B6</accession>
<protein>
    <recommendedName>
        <fullName evidence="1">Alanine--tRNA ligase, mitochondrial</fullName>
        <ecNumber evidence="1">6.1.1.7</ecNumber>
    </recommendedName>
    <alternativeName>
        <fullName evidence="1 4">Alanyl-tRNA synthetase</fullName>
        <shortName evidence="1 4">AlaRS</shortName>
    </alternativeName>
</protein>
<reference key="1">
    <citation type="journal article" date="2000" name="Proc. Natl. Acad. Sci. U.S.A.">
        <title>Origin of mitochondria in relation to evolutionary history of eukaryotic alanyl-tRNA synthetase.</title>
        <authorList>
            <person name="Chihade J.W."/>
            <person name="Brown J.R."/>
            <person name="Schimmel P.R."/>
            <person name="Ribas De Pouplana L."/>
        </authorList>
    </citation>
    <scope>NUCLEOTIDE SEQUENCE [MRNA]</scope>
</reference>
<reference key="2">
    <citation type="journal article" date="2000" name="Science">
        <title>The genome sequence of Drosophila melanogaster.</title>
        <authorList>
            <person name="Adams M.D."/>
            <person name="Celniker S.E."/>
            <person name="Holt R.A."/>
            <person name="Evans C.A."/>
            <person name="Gocayne J.D."/>
            <person name="Amanatides P.G."/>
            <person name="Scherer S.E."/>
            <person name="Li P.W."/>
            <person name="Hoskins R.A."/>
            <person name="Galle R.F."/>
            <person name="George R.A."/>
            <person name="Lewis S.E."/>
            <person name="Richards S."/>
            <person name="Ashburner M."/>
            <person name="Henderson S.N."/>
            <person name="Sutton G.G."/>
            <person name="Wortman J.R."/>
            <person name="Yandell M.D."/>
            <person name="Zhang Q."/>
            <person name="Chen L.X."/>
            <person name="Brandon R.C."/>
            <person name="Rogers Y.-H.C."/>
            <person name="Blazej R.G."/>
            <person name="Champe M."/>
            <person name="Pfeiffer B.D."/>
            <person name="Wan K.H."/>
            <person name="Doyle C."/>
            <person name="Baxter E.G."/>
            <person name="Helt G."/>
            <person name="Nelson C.R."/>
            <person name="Miklos G.L.G."/>
            <person name="Abril J.F."/>
            <person name="Agbayani A."/>
            <person name="An H.-J."/>
            <person name="Andrews-Pfannkoch C."/>
            <person name="Baldwin D."/>
            <person name="Ballew R.M."/>
            <person name="Basu A."/>
            <person name="Baxendale J."/>
            <person name="Bayraktaroglu L."/>
            <person name="Beasley E.M."/>
            <person name="Beeson K.Y."/>
            <person name="Benos P.V."/>
            <person name="Berman B.P."/>
            <person name="Bhandari D."/>
            <person name="Bolshakov S."/>
            <person name="Borkova D."/>
            <person name="Botchan M.R."/>
            <person name="Bouck J."/>
            <person name="Brokstein P."/>
            <person name="Brottier P."/>
            <person name="Burtis K.C."/>
            <person name="Busam D.A."/>
            <person name="Butler H."/>
            <person name="Cadieu E."/>
            <person name="Center A."/>
            <person name="Chandra I."/>
            <person name="Cherry J.M."/>
            <person name="Cawley S."/>
            <person name="Dahlke C."/>
            <person name="Davenport L.B."/>
            <person name="Davies P."/>
            <person name="de Pablos B."/>
            <person name="Delcher A."/>
            <person name="Deng Z."/>
            <person name="Mays A.D."/>
            <person name="Dew I."/>
            <person name="Dietz S.M."/>
            <person name="Dodson K."/>
            <person name="Doup L.E."/>
            <person name="Downes M."/>
            <person name="Dugan-Rocha S."/>
            <person name="Dunkov B.C."/>
            <person name="Dunn P."/>
            <person name="Durbin K.J."/>
            <person name="Evangelista C.C."/>
            <person name="Ferraz C."/>
            <person name="Ferriera S."/>
            <person name="Fleischmann W."/>
            <person name="Fosler C."/>
            <person name="Gabrielian A.E."/>
            <person name="Garg N.S."/>
            <person name="Gelbart W.M."/>
            <person name="Glasser K."/>
            <person name="Glodek A."/>
            <person name="Gong F."/>
            <person name="Gorrell J.H."/>
            <person name="Gu Z."/>
            <person name="Guan P."/>
            <person name="Harris M."/>
            <person name="Harris N.L."/>
            <person name="Harvey D.A."/>
            <person name="Heiman T.J."/>
            <person name="Hernandez J.R."/>
            <person name="Houck J."/>
            <person name="Hostin D."/>
            <person name="Houston K.A."/>
            <person name="Howland T.J."/>
            <person name="Wei M.-H."/>
            <person name="Ibegwam C."/>
            <person name="Jalali M."/>
            <person name="Kalush F."/>
            <person name="Karpen G.H."/>
            <person name="Ke Z."/>
            <person name="Kennison J.A."/>
            <person name="Ketchum K.A."/>
            <person name="Kimmel B.E."/>
            <person name="Kodira C.D."/>
            <person name="Kraft C.L."/>
            <person name="Kravitz S."/>
            <person name="Kulp D."/>
            <person name="Lai Z."/>
            <person name="Lasko P."/>
            <person name="Lei Y."/>
            <person name="Levitsky A.A."/>
            <person name="Li J.H."/>
            <person name="Li Z."/>
            <person name="Liang Y."/>
            <person name="Lin X."/>
            <person name="Liu X."/>
            <person name="Mattei B."/>
            <person name="McIntosh T.C."/>
            <person name="McLeod M.P."/>
            <person name="McPherson D."/>
            <person name="Merkulov G."/>
            <person name="Milshina N.V."/>
            <person name="Mobarry C."/>
            <person name="Morris J."/>
            <person name="Moshrefi A."/>
            <person name="Mount S.M."/>
            <person name="Moy M."/>
            <person name="Murphy B."/>
            <person name="Murphy L."/>
            <person name="Muzny D.M."/>
            <person name="Nelson D.L."/>
            <person name="Nelson D.R."/>
            <person name="Nelson K.A."/>
            <person name="Nixon K."/>
            <person name="Nusskern D.R."/>
            <person name="Pacleb J.M."/>
            <person name="Palazzolo M."/>
            <person name="Pittman G.S."/>
            <person name="Pan S."/>
            <person name="Pollard J."/>
            <person name="Puri V."/>
            <person name="Reese M.G."/>
            <person name="Reinert K."/>
            <person name="Remington K."/>
            <person name="Saunders R.D.C."/>
            <person name="Scheeler F."/>
            <person name="Shen H."/>
            <person name="Shue B.C."/>
            <person name="Siden-Kiamos I."/>
            <person name="Simpson M."/>
            <person name="Skupski M.P."/>
            <person name="Smith T.J."/>
            <person name="Spier E."/>
            <person name="Spradling A.C."/>
            <person name="Stapleton M."/>
            <person name="Strong R."/>
            <person name="Sun E."/>
            <person name="Svirskas R."/>
            <person name="Tector C."/>
            <person name="Turner R."/>
            <person name="Venter E."/>
            <person name="Wang A.H."/>
            <person name="Wang X."/>
            <person name="Wang Z.-Y."/>
            <person name="Wassarman D.A."/>
            <person name="Weinstock G.M."/>
            <person name="Weissenbach J."/>
            <person name="Williams S.M."/>
            <person name="Woodage T."/>
            <person name="Worley K.C."/>
            <person name="Wu D."/>
            <person name="Yang S."/>
            <person name="Yao Q.A."/>
            <person name="Ye J."/>
            <person name="Yeh R.-F."/>
            <person name="Zaveri J.S."/>
            <person name="Zhan M."/>
            <person name="Zhang G."/>
            <person name="Zhao Q."/>
            <person name="Zheng L."/>
            <person name="Zheng X.H."/>
            <person name="Zhong F.N."/>
            <person name="Zhong W."/>
            <person name="Zhou X."/>
            <person name="Zhu S.C."/>
            <person name="Zhu X."/>
            <person name="Smith H.O."/>
            <person name="Gibbs R.A."/>
            <person name="Myers E.W."/>
            <person name="Rubin G.M."/>
            <person name="Venter J.C."/>
        </authorList>
    </citation>
    <scope>NUCLEOTIDE SEQUENCE [LARGE SCALE GENOMIC DNA]</scope>
    <source>
        <strain>Berkeley</strain>
    </source>
</reference>
<reference key="3">
    <citation type="journal article" date="2002" name="Genome Biol.">
        <title>Annotation of the Drosophila melanogaster euchromatic genome: a systematic review.</title>
        <authorList>
            <person name="Misra S."/>
            <person name="Crosby M.A."/>
            <person name="Mungall C.J."/>
            <person name="Matthews B.B."/>
            <person name="Campbell K.S."/>
            <person name="Hradecky P."/>
            <person name="Huang Y."/>
            <person name="Kaminker J.S."/>
            <person name="Millburn G.H."/>
            <person name="Prochnik S.E."/>
            <person name="Smith C.D."/>
            <person name="Tupy J.L."/>
            <person name="Whitfield E.J."/>
            <person name="Bayraktaroglu L."/>
            <person name="Berman B.P."/>
            <person name="Bettencourt B.R."/>
            <person name="Celniker S.E."/>
            <person name="de Grey A.D.N.J."/>
            <person name="Drysdale R.A."/>
            <person name="Harris N.L."/>
            <person name="Richter J."/>
            <person name="Russo S."/>
            <person name="Schroeder A.J."/>
            <person name="Shu S.Q."/>
            <person name="Stapleton M."/>
            <person name="Yamada C."/>
            <person name="Ashburner M."/>
            <person name="Gelbart W.M."/>
            <person name="Rubin G.M."/>
            <person name="Lewis S.E."/>
        </authorList>
    </citation>
    <scope>GENOME REANNOTATION</scope>
    <source>
        <strain>Berkeley</strain>
    </source>
</reference>
<reference key="4">
    <citation type="journal article" date="2002" name="Genome Biol.">
        <title>A Drosophila full-length cDNA resource.</title>
        <authorList>
            <person name="Stapleton M."/>
            <person name="Carlson J.W."/>
            <person name="Brokstein P."/>
            <person name="Yu C."/>
            <person name="Champe M."/>
            <person name="George R.A."/>
            <person name="Guarin H."/>
            <person name="Kronmiller B."/>
            <person name="Pacleb J.M."/>
            <person name="Park S."/>
            <person name="Wan K.H."/>
            <person name="Rubin G.M."/>
            <person name="Celniker S.E."/>
        </authorList>
    </citation>
    <scope>NUCLEOTIDE SEQUENCE [LARGE SCALE MRNA]</scope>
    <source>
        <strain>Berkeley</strain>
    </source>
</reference>
<reference key="5">
    <citation type="journal article" date="2001" name="EMBO J.">
        <title>Translocation within the acceptor helix of a major tRNA identity determinant.</title>
        <authorList>
            <person name="Lovato M.A."/>
            <person name="Chihade J.W."/>
            <person name="Schimmel P."/>
        </authorList>
    </citation>
    <scope>FUNCTION</scope>
</reference>
<reference key="6">
    <citation type="journal article" date="2004" name="Mol. Cell">
        <title>Positional recognition of a tRNA determinant dependent on a peptide insertion.</title>
        <authorList>
            <person name="Lovato M.A."/>
            <person name="Swairjo M.A."/>
            <person name="Schimmel P."/>
        </authorList>
    </citation>
    <scope>FUNCTION</scope>
</reference>
<keyword id="KW-0030">Aminoacyl-tRNA synthetase</keyword>
<keyword id="KW-0067">ATP-binding</keyword>
<keyword id="KW-0436">Ligase</keyword>
<keyword id="KW-0479">Metal-binding</keyword>
<keyword id="KW-0496">Mitochondrion</keyword>
<keyword id="KW-0547">Nucleotide-binding</keyword>
<keyword id="KW-0648">Protein biosynthesis</keyword>
<keyword id="KW-1185">Reference proteome</keyword>
<keyword id="KW-0694">RNA-binding</keyword>
<keyword id="KW-0809">Transit peptide</keyword>
<keyword id="KW-0820">tRNA-binding</keyword>
<keyword id="KW-0862">Zinc</keyword>
<proteinExistence type="evidence at transcript level"/>
<feature type="transit peptide" description="Mitochondrion" evidence="1">
    <location>
        <begin position="1"/>
        <end position="24"/>
    </location>
</feature>
<feature type="chain" id="PRO_0000402119" description="Alanine--tRNA ligase, mitochondrial">
    <location>
        <begin position="25"/>
        <end position="1012"/>
    </location>
</feature>
<feature type="binding site" evidence="1">
    <location>
        <position position="656"/>
    </location>
    <ligand>
        <name>Zn(2+)</name>
        <dbReference type="ChEBI" id="CHEBI:29105"/>
    </ligand>
</feature>
<feature type="binding site" evidence="1">
    <location>
        <position position="660"/>
    </location>
    <ligand>
        <name>Zn(2+)</name>
        <dbReference type="ChEBI" id="CHEBI:29105"/>
    </ligand>
</feature>
<feature type="binding site" evidence="1">
    <location>
        <position position="766"/>
    </location>
    <ligand>
        <name>Zn(2+)</name>
        <dbReference type="ChEBI" id="CHEBI:29105"/>
    </ligand>
</feature>
<feature type="binding site" evidence="1">
    <location>
        <position position="770"/>
    </location>
    <ligand>
        <name>Zn(2+)</name>
        <dbReference type="ChEBI" id="CHEBI:29105"/>
    </ligand>
</feature>
<feature type="sequence conflict" description="In Ref. 1; AAF05591." evidence="5" ref="1">
    <original>S</original>
    <variation>N</variation>
    <location>
        <position position="477"/>
    </location>
</feature>
<comment type="function">
    <text evidence="1 2 3">Catalyzes the attachment of alanine to tRNA(Ala) in a two-step reaction: alanine is first activated by ATP to form Ala-AMP and then transferred to the acceptor end of tRNA(Ala). Also edits incorrectly charged tRNA(Ala) via its editing domain.</text>
</comment>
<comment type="catalytic activity">
    <reaction evidence="1">
        <text>tRNA(Ala) + L-alanine + ATP = L-alanyl-tRNA(Ala) + AMP + diphosphate</text>
        <dbReference type="Rhea" id="RHEA:12540"/>
        <dbReference type="Rhea" id="RHEA-COMP:9657"/>
        <dbReference type="Rhea" id="RHEA-COMP:9923"/>
        <dbReference type="ChEBI" id="CHEBI:30616"/>
        <dbReference type="ChEBI" id="CHEBI:33019"/>
        <dbReference type="ChEBI" id="CHEBI:57972"/>
        <dbReference type="ChEBI" id="CHEBI:78442"/>
        <dbReference type="ChEBI" id="CHEBI:78497"/>
        <dbReference type="ChEBI" id="CHEBI:456215"/>
        <dbReference type="EC" id="6.1.1.7"/>
    </reaction>
</comment>
<comment type="cofactor">
    <cofactor evidence="1">
        <name>Zn(2+)</name>
        <dbReference type="ChEBI" id="CHEBI:29105"/>
    </cofactor>
    <text evidence="1">Binds 1 zinc ion per subunit.</text>
</comment>
<comment type="subunit">
    <text evidence="1">Monomer.</text>
</comment>
<comment type="subcellular location">
    <subcellularLocation>
        <location evidence="1">Mitochondrion</location>
    </subcellularLocation>
</comment>
<comment type="domain">
    <text evidence="1">Consists of three domains; the N-terminal catalytic domain, the editing domain and the C-terminal C-Ala domain. The editing domain removes incorrectly charged amino acids, while the C-Ala domain, along with tRNA(Ala), serves as a bridge to cooperatively bring together the editing and aminoacylation centers thus stimulating deacylation of misacylated tRNAs.</text>
</comment>
<comment type="similarity">
    <text evidence="1">Belongs to the class-II aminoacyl-tRNA synthetase family.</text>
</comment>
<dbReference type="EC" id="6.1.1.7" evidence="1"/>
<dbReference type="EMBL" id="AF188716">
    <property type="protein sequence ID" value="AAF05591.1"/>
    <property type="molecule type" value="mRNA"/>
</dbReference>
<dbReference type="EMBL" id="AE014296">
    <property type="protein sequence ID" value="AAF50804.1"/>
    <property type="molecule type" value="Genomic_DNA"/>
</dbReference>
<dbReference type="EMBL" id="AY128439">
    <property type="protein sequence ID" value="AAM75032.1"/>
    <property type="molecule type" value="mRNA"/>
</dbReference>
<dbReference type="EMBL" id="BT001744">
    <property type="protein sequence ID" value="AAN71499.1"/>
    <property type="molecule type" value="mRNA"/>
</dbReference>
<dbReference type="RefSeq" id="NP_523932.2">
    <property type="nucleotide sequence ID" value="NM_079208.3"/>
</dbReference>
<dbReference type="SMR" id="Q9VRJ1"/>
<dbReference type="FunCoup" id="Q9VRJ1">
    <property type="interactions" value="480"/>
</dbReference>
<dbReference type="IntAct" id="Q9VRJ1">
    <property type="interactions" value="3"/>
</dbReference>
<dbReference type="STRING" id="7227.FBpp0076871"/>
<dbReference type="PaxDb" id="7227-FBpp0076871"/>
<dbReference type="EnsemblMetazoa" id="FBtr0077168">
    <property type="protein sequence ID" value="FBpp0076871"/>
    <property type="gene ID" value="FBgn0028962"/>
</dbReference>
<dbReference type="GeneID" id="38595"/>
<dbReference type="KEGG" id="dme:Dmel_CG4633"/>
<dbReference type="UCSC" id="CG4633-RA">
    <property type="organism name" value="d. melanogaster"/>
</dbReference>
<dbReference type="AGR" id="FB:FBgn0028962"/>
<dbReference type="CTD" id="38595"/>
<dbReference type="FlyBase" id="FBgn0028962">
    <property type="gene designation" value="AlaRS-m"/>
</dbReference>
<dbReference type="VEuPathDB" id="VectorBase:FBgn0028962"/>
<dbReference type="eggNOG" id="KOG0188">
    <property type="taxonomic scope" value="Eukaryota"/>
</dbReference>
<dbReference type="GeneTree" id="ENSGT00940000158246"/>
<dbReference type="HOGENOM" id="CLU_004485_5_0_1"/>
<dbReference type="InParanoid" id="Q9VRJ1"/>
<dbReference type="OMA" id="ECFEIWR"/>
<dbReference type="OrthoDB" id="2423964at2759"/>
<dbReference type="PhylomeDB" id="Q9VRJ1"/>
<dbReference type="BRENDA" id="6.1.1.7">
    <property type="organism ID" value="1994"/>
</dbReference>
<dbReference type="BioGRID-ORCS" id="38595">
    <property type="hits" value="0 hits in 1 CRISPR screen"/>
</dbReference>
<dbReference type="GenomeRNAi" id="38595"/>
<dbReference type="PRO" id="PR:Q9VRJ1"/>
<dbReference type="Proteomes" id="UP000000803">
    <property type="component" value="Chromosome 3L"/>
</dbReference>
<dbReference type="Bgee" id="FBgn0028962">
    <property type="expression patterns" value="Expressed in adult oenocyte (Drosophila) in body wall and 43 other cell types or tissues"/>
</dbReference>
<dbReference type="GO" id="GO:0005739">
    <property type="term" value="C:mitochondrion"/>
    <property type="evidence" value="ECO:0000318"/>
    <property type="project" value="GO_Central"/>
</dbReference>
<dbReference type="GO" id="GO:0004813">
    <property type="term" value="F:alanine-tRNA ligase activity"/>
    <property type="evidence" value="ECO:0000318"/>
    <property type="project" value="GO_Central"/>
</dbReference>
<dbReference type="GO" id="GO:0002161">
    <property type="term" value="F:aminoacyl-tRNA deacylase activity"/>
    <property type="evidence" value="ECO:0000250"/>
    <property type="project" value="FlyBase"/>
</dbReference>
<dbReference type="GO" id="GO:0005524">
    <property type="term" value="F:ATP binding"/>
    <property type="evidence" value="ECO:0007669"/>
    <property type="project" value="UniProtKB-UniRule"/>
</dbReference>
<dbReference type="GO" id="GO:0000049">
    <property type="term" value="F:tRNA binding"/>
    <property type="evidence" value="ECO:0007669"/>
    <property type="project" value="UniProtKB-KW"/>
</dbReference>
<dbReference type="GO" id="GO:0008270">
    <property type="term" value="F:zinc ion binding"/>
    <property type="evidence" value="ECO:0007669"/>
    <property type="project" value="UniProtKB-UniRule"/>
</dbReference>
<dbReference type="GO" id="GO:0006419">
    <property type="term" value="P:alanyl-tRNA aminoacylation"/>
    <property type="evidence" value="ECO:0000318"/>
    <property type="project" value="GO_Central"/>
</dbReference>
<dbReference type="CDD" id="cd00673">
    <property type="entry name" value="AlaRS_core"/>
    <property type="match status" value="1"/>
</dbReference>
<dbReference type="FunFam" id="3.30.930.10:FF:000011">
    <property type="entry name" value="Alanine--tRNA ligase, cytoplasmic"/>
    <property type="match status" value="1"/>
</dbReference>
<dbReference type="FunFam" id="3.30.980.10:FF:000013">
    <property type="entry name" value="alanine--tRNA ligase, mitochondrial"/>
    <property type="match status" value="1"/>
</dbReference>
<dbReference type="Gene3D" id="2.40.30.130">
    <property type="match status" value="1"/>
</dbReference>
<dbReference type="Gene3D" id="3.30.930.10">
    <property type="entry name" value="Bira Bifunctional Protein, Domain 2"/>
    <property type="match status" value="1"/>
</dbReference>
<dbReference type="Gene3D" id="3.30.980.10">
    <property type="entry name" value="Threonyl-trna Synthetase, Chain A, domain 2"/>
    <property type="match status" value="1"/>
</dbReference>
<dbReference type="HAMAP" id="MF_00036_B">
    <property type="entry name" value="Ala_tRNA_synth_B"/>
    <property type="match status" value="1"/>
</dbReference>
<dbReference type="InterPro" id="IPR045864">
    <property type="entry name" value="aa-tRNA-synth_II/BPL/LPL"/>
</dbReference>
<dbReference type="InterPro" id="IPR002318">
    <property type="entry name" value="Ala-tRNA-lgiase_IIc"/>
</dbReference>
<dbReference type="InterPro" id="IPR018162">
    <property type="entry name" value="Ala-tRNA-ligase_IIc_anticod-bd"/>
</dbReference>
<dbReference type="InterPro" id="IPR018165">
    <property type="entry name" value="Ala-tRNA-synth_IIc_core"/>
</dbReference>
<dbReference type="InterPro" id="IPR018164">
    <property type="entry name" value="Ala-tRNA-synth_IIc_N"/>
</dbReference>
<dbReference type="InterPro" id="IPR050058">
    <property type="entry name" value="Ala-tRNA_ligase"/>
</dbReference>
<dbReference type="InterPro" id="IPR023033">
    <property type="entry name" value="Ala_tRNA_ligase_euk/bac"/>
</dbReference>
<dbReference type="InterPro" id="IPR018163">
    <property type="entry name" value="Thr/Ala-tRNA-synth_IIc_edit"/>
</dbReference>
<dbReference type="InterPro" id="IPR009000">
    <property type="entry name" value="Transl_B-barrel_sf"/>
</dbReference>
<dbReference type="InterPro" id="IPR012947">
    <property type="entry name" value="tRNA_SAD"/>
</dbReference>
<dbReference type="NCBIfam" id="TIGR00344">
    <property type="entry name" value="alaS"/>
    <property type="match status" value="1"/>
</dbReference>
<dbReference type="PANTHER" id="PTHR11777:SF39">
    <property type="entry name" value="ALANINE--TRNA LIGASE, MITOCHONDRIAL"/>
    <property type="match status" value="1"/>
</dbReference>
<dbReference type="PANTHER" id="PTHR11777">
    <property type="entry name" value="ALANYL-TRNA SYNTHETASE"/>
    <property type="match status" value="1"/>
</dbReference>
<dbReference type="Pfam" id="PF01411">
    <property type="entry name" value="tRNA-synt_2c"/>
    <property type="match status" value="2"/>
</dbReference>
<dbReference type="PRINTS" id="PR00980">
    <property type="entry name" value="TRNASYNTHALA"/>
</dbReference>
<dbReference type="SMART" id="SM00863">
    <property type="entry name" value="tRNA_SAD"/>
    <property type="match status" value="1"/>
</dbReference>
<dbReference type="SUPFAM" id="SSF55681">
    <property type="entry name" value="Class II aaRS and biotin synthetases"/>
    <property type="match status" value="1"/>
</dbReference>
<dbReference type="SUPFAM" id="SSF101353">
    <property type="entry name" value="Putative anticodon-binding domain of alanyl-tRNA synthetase (AlaRS)"/>
    <property type="match status" value="1"/>
</dbReference>
<dbReference type="SUPFAM" id="SSF55186">
    <property type="entry name" value="ThrRS/AlaRS common domain"/>
    <property type="match status" value="1"/>
</dbReference>
<dbReference type="SUPFAM" id="SSF50447">
    <property type="entry name" value="Translation proteins"/>
    <property type="match status" value="1"/>
</dbReference>
<dbReference type="PROSITE" id="PS50860">
    <property type="entry name" value="AA_TRNA_LIGASE_II_ALA"/>
    <property type="match status" value="1"/>
</dbReference>
<name>SYAM_DROME</name>